<accession>Q21RW5</accession>
<gene>
    <name evidence="1" type="primary">rplP</name>
    <name type="ordered locus">Rfer_3788</name>
</gene>
<reference key="1">
    <citation type="submission" date="2006-02" db="EMBL/GenBank/DDBJ databases">
        <title>Complete sequence of chromosome of Rhodoferax ferrireducens DSM 15236.</title>
        <authorList>
            <person name="Copeland A."/>
            <person name="Lucas S."/>
            <person name="Lapidus A."/>
            <person name="Barry K."/>
            <person name="Detter J.C."/>
            <person name="Glavina del Rio T."/>
            <person name="Hammon N."/>
            <person name="Israni S."/>
            <person name="Pitluck S."/>
            <person name="Brettin T."/>
            <person name="Bruce D."/>
            <person name="Han C."/>
            <person name="Tapia R."/>
            <person name="Gilna P."/>
            <person name="Kiss H."/>
            <person name="Schmutz J."/>
            <person name="Larimer F."/>
            <person name="Land M."/>
            <person name="Kyrpides N."/>
            <person name="Ivanova N."/>
            <person name="Richardson P."/>
        </authorList>
    </citation>
    <scope>NUCLEOTIDE SEQUENCE [LARGE SCALE GENOMIC DNA]</scope>
    <source>
        <strain>ATCC BAA-621 / DSM 15236 / T118</strain>
    </source>
</reference>
<dbReference type="EMBL" id="CP000267">
    <property type="protein sequence ID" value="ABD71488.1"/>
    <property type="molecule type" value="Genomic_DNA"/>
</dbReference>
<dbReference type="RefSeq" id="WP_011466051.1">
    <property type="nucleotide sequence ID" value="NC_007908.1"/>
</dbReference>
<dbReference type="SMR" id="Q21RW5"/>
<dbReference type="STRING" id="338969.Rfer_3788"/>
<dbReference type="KEGG" id="rfr:Rfer_3788"/>
<dbReference type="eggNOG" id="COG0197">
    <property type="taxonomic scope" value="Bacteria"/>
</dbReference>
<dbReference type="HOGENOM" id="CLU_078858_2_1_4"/>
<dbReference type="OrthoDB" id="9802589at2"/>
<dbReference type="Proteomes" id="UP000008332">
    <property type="component" value="Chromosome"/>
</dbReference>
<dbReference type="GO" id="GO:0022625">
    <property type="term" value="C:cytosolic large ribosomal subunit"/>
    <property type="evidence" value="ECO:0007669"/>
    <property type="project" value="TreeGrafter"/>
</dbReference>
<dbReference type="GO" id="GO:0019843">
    <property type="term" value="F:rRNA binding"/>
    <property type="evidence" value="ECO:0007669"/>
    <property type="project" value="UniProtKB-UniRule"/>
</dbReference>
<dbReference type="GO" id="GO:0003735">
    <property type="term" value="F:structural constituent of ribosome"/>
    <property type="evidence" value="ECO:0007669"/>
    <property type="project" value="InterPro"/>
</dbReference>
<dbReference type="GO" id="GO:0000049">
    <property type="term" value="F:tRNA binding"/>
    <property type="evidence" value="ECO:0007669"/>
    <property type="project" value="UniProtKB-KW"/>
</dbReference>
<dbReference type="GO" id="GO:0006412">
    <property type="term" value="P:translation"/>
    <property type="evidence" value="ECO:0007669"/>
    <property type="project" value="UniProtKB-UniRule"/>
</dbReference>
<dbReference type="CDD" id="cd01433">
    <property type="entry name" value="Ribosomal_L16_L10e"/>
    <property type="match status" value="1"/>
</dbReference>
<dbReference type="FunFam" id="3.90.1170.10:FF:000001">
    <property type="entry name" value="50S ribosomal protein L16"/>
    <property type="match status" value="1"/>
</dbReference>
<dbReference type="Gene3D" id="3.90.1170.10">
    <property type="entry name" value="Ribosomal protein L10e/L16"/>
    <property type="match status" value="1"/>
</dbReference>
<dbReference type="HAMAP" id="MF_01342">
    <property type="entry name" value="Ribosomal_uL16"/>
    <property type="match status" value="1"/>
</dbReference>
<dbReference type="InterPro" id="IPR047873">
    <property type="entry name" value="Ribosomal_uL16"/>
</dbReference>
<dbReference type="InterPro" id="IPR000114">
    <property type="entry name" value="Ribosomal_uL16_bact-type"/>
</dbReference>
<dbReference type="InterPro" id="IPR020798">
    <property type="entry name" value="Ribosomal_uL16_CS"/>
</dbReference>
<dbReference type="InterPro" id="IPR016180">
    <property type="entry name" value="Ribosomal_uL16_dom"/>
</dbReference>
<dbReference type="InterPro" id="IPR036920">
    <property type="entry name" value="Ribosomal_uL16_sf"/>
</dbReference>
<dbReference type="NCBIfam" id="TIGR01164">
    <property type="entry name" value="rplP_bact"/>
    <property type="match status" value="1"/>
</dbReference>
<dbReference type="PANTHER" id="PTHR12220">
    <property type="entry name" value="50S/60S RIBOSOMAL PROTEIN L16"/>
    <property type="match status" value="1"/>
</dbReference>
<dbReference type="PANTHER" id="PTHR12220:SF13">
    <property type="entry name" value="LARGE RIBOSOMAL SUBUNIT PROTEIN UL16M"/>
    <property type="match status" value="1"/>
</dbReference>
<dbReference type="Pfam" id="PF00252">
    <property type="entry name" value="Ribosomal_L16"/>
    <property type="match status" value="1"/>
</dbReference>
<dbReference type="PRINTS" id="PR00060">
    <property type="entry name" value="RIBOSOMALL16"/>
</dbReference>
<dbReference type="SUPFAM" id="SSF54686">
    <property type="entry name" value="Ribosomal protein L16p/L10e"/>
    <property type="match status" value="1"/>
</dbReference>
<dbReference type="PROSITE" id="PS00586">
    <property type="entry name" value="RIBOSOMAL_L16_1"/>
    <property type="match status" value="1"/>
</dbReference>
<proteinExistence type="inferred from homology"/>
<feature type="chain" id="PRO_0000251661" description="Large ribosomal subunit protein uL16">
    <location>
        <begin position="1"/>
        <end position="138"/>
    </location>
</feature>
<feature type="region of interest" description="Disordered" evidence="2">
    <location>
        <begin position="1"/>
        <end position="21"/>
    </location>
</feature>
<feature type="compositionally biased region" description="Basic residues" evidence="2">
    <location>
        <begin position="1"/>
        <end position="13"/>
    </location>
</feature>
<keyword id="KW-1185">Reference proteome</keyword>
<keyword id="KW-0687">Ribonucleoprotein</keyword>
<keyword id="KW-0689">Ribosomal protein</keyword>
<keyword id="KW-0694">RNA-binding</keyword>
<keyword id="KW-0699">rRNA-binding</keyword>
<keyword id="KW-0820">tRNA-binding</keyword>
<protein>
    <recommendedName>
        <fullName evidence="1">Large ribosomal subunit protein uL16</fullName>
    </recommendedName>
    <alternativeName>
        <fullName evidence="3">50S ribosomal protein L16</fullName>
    </alternativeName>
</protein>
<comment type="function">
    <text evidence="1">Binds 23S rRNA and is also seen to make contacts with the A and possibly P site tRNAs.</text>
</comment>
<comment type="subunit">
    <text evidence="1">Part of the 50S ribosomal subunit.</text>
</comment>
<comment type="similarity">
    <text evidence="1">Belongs to the universal ribosomal protein uL16 family.</text>
</comment>
<organism>
    <name type="scientific">Albidiferax ferrireducens (strain ATCC BAA-621 / DSM 15236 / T118)</name>
    <name type="common">Rhodoferax ferrireducens</name>
    <dbReference type="NCBI Taxonomy" id="338969"/>
    <lineage>
        <taxon>Bacteria</taxon>
        <taxon>Pseudomonadati</taxon>
        <taxon>Pseudomonadota</taxon>
        <taxon>Betaproteobacteria</taxon>
        <taxon>Burkholderiales</taxon>
        <taxon>Comamonadaceae</taxon>
        <taxon>Rhodoferax</taxon>
    </lineage>
</organism>
<evidence type="ECO:0000255" key="1">
    <source>
        <dbReference type="HAMAP-Rule" id="MF_01342"/>
    </source>
</evidence>
<evidence type="ECO:0000256" key="2">
    <source>
        <dbReference type="SAM" id="MobiDB-lite"/>
    </source>
</evidence>
<evidence type="ECO:0000305" key="3"/>
<name>RL16_ALBFT</name>
<sequence length="138" mass="15503">MLQPARRKYRKEQKGRNTGIATRGSSVAFGDFGLKCIDRGRLTARQIEAARRAISRHVKRGGRIWIRVFPDKPISQKPAEVRMGNGKGNPEYYVAEIQPGKIVFEIVGVPEELAREAFRLAAAKLPLRTTFVARMIGQ</sequence>